<protein>
    <recommendedName>
        <fullName>Tyrosyl-DNA phosphodiesterase 1</fullName>
        <shortName>Tyr-DNA phosphodiesterase 1</shortName>
        <ecNumber evidence="6">3.1.4.-</ecNumber>
    </recommendedName>
</protein>
<dbReference type="EC" id="3.1.4.-" evidence="6"/>
<dbReference type="EMBL" id="Z36092">
    <property type="protein sequence ID" value="CAA85186.1"/>
    <property type="molecule type" value="Genomic_DNA"/>
</dbReference>
<dbReference type="EMBL" id="BK006936">
    <property type="protein sequence ID" value="DAA07340.1"/>
    <property type="molecule type" value="Genomic_DNA"/>
</dbReference>
<dbReference type="PIR" id="S46099">
    <property type="entry name" value="S46099"/>
</dbReference>
<dbReference type="RefSeq" id="NP_009782.3">
    <property type="nucleotide sequence ID" value="NM_001178571.3"/>
</dbReference>
<dbReference type="PDB" id="1Q32">
    <property type="method" value="X-ray"/>
    <property type="resolution" value="2.03 A"/>
    <property type="chains" value="A/B/C/D=1-544"/>
</dbReference>
<dbReference type="PDB" id="3SQ3">
    <property type="method" value="X-ray"/>
    <property type="resolution" value="2.50 A"/>
    <property type="chains" value="A/B/C/D=79-539"/>
</dbReference>
<dbReference type="PDB" id="3SQ5">
    <property type="method" value="X-ray"/>
    <property type="resolution" value="2.30 A"/>
    <property type="chains" value="A/B/C/D=79-539"/>
</dbReference>
<dbReference type="PDB" id="3SQ7">
    <property type="method" value="X-ray"/>
    <property type="resolution" value="2.00 A"/>
    <property type="chains" value="A/B/C/D=79-539"/>
</dbReference>
<dbReference type="PDB" id="3SQ8">
    <property type="method" value="X-ray"/>
    <property type="resolution" value="2.10 A"/>
    <property type="chains" value="A/B/C/D=79-539"/>
</dbReference>
<dbReference type="PDBsum" id="1Q32"/>
<dbReference type="PDBsum" id="3SQ3"/>
<dbReference type="PDBsum" id="3SQ5"/>
<dbReference type="PDBsum" id="3SQ7"/>
<dbReference type="PDBsum" id="3SQ8"/>
<dbReference type="SMR" id="P38319"/>
<dbReference type="BioGRID" id="32920">
    <property type="interactions" value="118"/>
</dbReference>
<dbReference type="DIP" id="DIP-4945N"/>
<dbReference type="FunCoup" id="P38319">
    <property type="interactions" value="543"/>
</dbReference>
<dbReference type="IntAct" id="P38319">
    <property type="interactions" value="18"/>
</dbReference>
<dbReference type="MINT" id="P38319"/>
<dbReference type="STRING" id="4932.YBR223C"/>
<dbReference type="CarbonylDB" id="P38319"/>
<dbReference type="iPTMnet" id="P38319"/>
<dbReference type="PaxDb" id="4932-YBR223C"/>
<dbReference type="PeptideAtlas" id="P38319"/>
<dbReference type="EnsemblFungi" id="YBR223C_mRNA">
    <property type="protein sequence ID" value="YBR223C"/>
    <property type="gene ID" value="YBR223C"/>
</dbReference>
<dbReference type="GeneID" id="852525"/>
<dbReference type="KEGG" id="sce:YBR223C"/>
<dbReference type="AGR" id="SGD:S000000427"/>
<dbReference type="SGD" id="S000000427">
    <property type="gene designation" value="TDP1"/>
</dbReference>
<dbReference type="VEuPathDB" id="FungiDB:YBR223C"/>
<dbReference type="eggNOG" id="KOG2031">
    <property type="taxonomic scope" value="Eukaryota"/>
</dbReference>
<dbReference type="GeneTree" id="ENSGT00390000002211"/>
<dbReference type="HOGENOM" id="CLU_010413_2_1_1"/>
<dbReference type="InParanoid" id="P38319"/>
<dbReference type="OMA" id="AHSKFYM"/>
<dbReference type="OrthoDB" id="47785at2759"/>
<dbReference type="BioCyc" id="YEAST:G3O-29158-MONOMER"/>
<dbReference type="BRENDA" id="3.1.4.1">
    <property type="organism ID" value="984"/>
</dbReference>
<dbReference type="BioGRID-ORCS" id="852525">
    <property type="hits" value="1 hit in 10 CRISPR screens"/>
</dbReference>
<dbReference type="EvolutionaryTrace" id="P38319"/>
<dbReference type="PRO" id="PR:P38319"/>
<dbReference type="Proteomes" id="UP000002311">
    <property type="component" value="Chromosome II"/>
</dbReference>
<dbReference type="RNAct" id="P38319">
    <property type="molecule type" value="protein"/>
</dbReference>
<dbReference type="GO" id="GO:0005739">
    <property type="term" value="C:mitochondrion"/>
    <property type="evidence" value="ECO:0000314"/>
    <property type="project" value="SGD"/>
</dbReference>
<dbReference type="GO" id="GO:0005634">
    <property type="term" value="C:nucleus"/>
    <property type="evidence" value="ECO:0000314"/>
    <property type="project" value="SGD"/>
</dbReference>
<dbReference type="GO" id="GO:0017005">
    <property type="term" value="F:3'-tyrosyl-DNA phosphodiesterase activity"/>
    <property type="evidence" value="ECO:0000314"/>
    <property type="project" value="SGD"/>
</dbReference>
<dbReference type="GO" id="GO:0070260">
    <property type="term" value="F:5'-tyrosyl-DNA phosphodiesterase activity"/>
    <property type="evidence" value="ECO:0000314"/>
    <property type="project" value="SGD"/>
</dbReference>
<dbReference type="GO" id="GO:0003690">
    <property type="term" value="F:double-stranded DNA binding"/>
    <property type="evidence" value="ECO:0000318"/>
    <property type="project" value="GO_Central"/>
</dbReference>
<dbReference type="GO" id="GO:0004527">
    <property type="term" value="F:exonuclease activity"/>
    <property type="evidence" value="ECO:0007669"/>
    <property type="project" value="UniProtKB-KW"/>
</dbReference>
<dbReference type="GO" id="GO:0003697">
    <property type="term" value="F:single-stranded DNA binding"/>
    <property type="evidence" value="ECO:0000318"/>
    <property type="project" value="GO_Central"/>
</dbReference>
<dbReference type="GO" id="GO:0006281">
    <property type="term" value="P:DNA repair"/>
    <property type="evidence" value="ECO:0000315"/>
    <property type="project" value="SGD"/>
</dbReference>
<dbReference type="CDD" id="cd09194">
    <property type="entry name" value="PLDc_yTdp1_1"/>
    <property type="match status" value="1"/>
</dbReference>
<dbReference type="CDD" id="cd09196">
    <property type="entry name" value="PLDc_yTdp1_2"/>
    <property type="match status" value="1"/>
</dbReference>
<dbReference type="Gene3D" id="3.30.870.10">
    <property type="entry name" value="Endonuclease Chain A"/>
    <property type="match status" value="2"/>
</dbReference>
<dbReference type="InterPro" id="IPR010347">
    <property type="entry name" value="Tdp1"/>
</dbReference>
<dbReference type="PANTHER" id="PTHR12415">
    <property type="entry name" value="TYROSYL-DNA PHOSPHODIESTERASE 1"/>
    <property type="match status" value="1"/>
</dbReference>
<dbReference type="PANTHER" id="PTHR12415:SF0">
    <property type="entry name" value="TYROSYL-DNA PHOSPHODIESTERASE 1"/>
    <property type="match status" value="1"/>
</dbReference>
<dbReference type="Pfam" id="PF06087">
    <property type="entry name" value="Tyr-DNA_phospho"/>
    <property type="match status" value="1"/>
</dbReference>
<dbReference type="SUPFAM" id="SSF56024">
    <property type="entry name" value="Phospholipase D/nuclease"/>
    <property type="match status" value="2"/>
</dbReference>
<name>TYDP1_YEAST</name>
<keyword id="KW-0002">3D-structure</keyword>
<keyword id="KW-0227">DNA damage</keyword>
<keyword id="KW-0234">DNA repair</keyword>
<keyword id="KW-0269">Exonuclease</keyword>
<keyword id="KW-0378">Hydrolase</keyword>
<keyword id="KW-0540">Nuclease</keyword>
<keyword id="KW-0539">Nucleus</keyword>
<keyword id="KW-1185">Reference proteome</keyword>
<keyword id="KW-0677">Repeat</keyword>
<organism>
    <name type="scientific">Saccharomyces cerevisiae (strain ATCC 204508 / S288c)</name>
    <name type="common">Baker's yeast</name>
    <dbReference type="NCBI Taxonomy" id="559292"/>
    <lineage>
        <taxon>Eukaryota</taxon>
        <taxon>Fungi</taxon>
        <taxon>Dikarya</taxon>
        <taxon>Ascomycota</taxon>
        <taxon>Saccharomycotina</taxon>
        <taxon>Saccharomycetes</taxon>
        <taxon>Saccharomycetales</taxon>
        <taxon>Saccharomycetaceae</taxon>
        <taxon>Saccharomyces</taxon>
    </lineage>
</organism>
<gene>
    <name type="primary">TDP1</name>
    <name type="ordered locus">YBR223C</name>
    <name type="ORF">YBR1520</name>
</gene>
<sequence length="544" mass="62333">MSRETNFNGTKRKRSDVAEKVAQRWKSVRYSAEMENMAPVNSNNDSDDCVIVSESKIIDLTNQEQDLSERIETNDTAKGAVFKLMKSDFYEREDFMGEVEDMITLKDIFGTETLKRSILFSFQYELDFLLRQFHQNVENITIVGQKGTIMPIEARAMDATLAVILKKVKLIEITMPPFASHHTKLIINFYDNGECKIFLPSNNFTSMETNLPQQVCWCSPLLKIGKEGLPVPFKRSLIEYLNSYHLKDIDELITKSVEEVNFAPLSELEFVYSTPSKFQSSGLLSFYNKLEKLSAGTSASDTAKHYLCQTSSIGTSLSRARDENLWTHLMIPLFTGIMSPPAKDTAGRKKAEILPTNSLINEYSQRKIKPYIIFPTEQEFVTSPLKWSSSGWFHFQYLQKKSYYEMLRNKFKVFYKQDPAMVTRRRGTTPAHSKFYMHCATNSAGPCDASQVFKELEWCLYTSANLSQTAWGTVSRKPRNYEAGVLYHSRRLANTRKVTCRTFTRDRRGCAGNPTHVAVPFTLPVIPYDLAEDECFCLARHEND</sequence>
<reference key="1">
    <citation type="journal article" date="1994" name="EMBO J.">
        <title>Complete DNA sequence of yeast chromosome II.</title>
        <authorList>
            <person name="Feldmann H."/>
            <person name="Aigle M."/>
            <person name="Aljinovic G."/>
            <person name="Andre B."/>
            <person name="Baclet M.C."/>
            <person name="Barthe C."/>
            <person name="Baur A."/>
            <person name="Becam A.-M."/>
            <person name="Biteau N."/>
            <person name="Boles E."/>
            <person name="Brandt T."/>
            <person name="Brendel M."/>
            <person name="Brueckner M."/>
            <person name="Bussereau F."/>
            <person name="Christiansen C."/>
            <person name="Contreras R."/>
            <person name="Crouzet M."/>
            <person name="Cziepluch C."/>
            <person name="Demolis N."/>
            <person name="Delaveau T."/>
            <person name="Doignon F."/>
            <person name="Domdey H."/>
            <person name="Duesterhus S."/>
            <person name="Dubois E."/>
            <person name="Dujon B."/>
            <person name="El Bakkoury M."/>
            <person name="Entian K.-D."/>
            <person name="Feuermann M."/>
            <person name="Fiers W."/>
            <person name="Fobo G.M."/>
            <person name="Fritz C."/>
            <person name="Gassenhuber J."/>
            <person name="Glansdorff N."/>
            <person name="Goffeau A."/>
            <person name="Grivell L.A."/>
            <person name="de Haan M."/>
            <person name="Hein C."/>
            <person name="Herbert C.J."/>
            <person name="Hollenberg C.P."/>
            <person name="Holmstroem K."/>
            <person name="Jacq C."/>
            <person name="Jacquet M."/>
            <person name="Jauniaux J.-C."/>
            <person name="Jonniaux J.-L."/>
            <person name="Kallesoee T."/>
            <person name="Kiesau P."/>
            <person name="Kirchrath L."/>
            <person name="Koetter P."/>
            <person name="Korol S."/>
            <person name="Liebl S."/>
            <person name="Logghe M."/>
            <person name="Lohan A.J.E."/>
            <person name="Louis E.J."/>
            <person name="Li Z.Y."/>
            <person name="Maat M.J."/>
            <person name="Mallet L."/>
            <person name="Mannhaupt G."/>
            <person name="Messenguy F."/>
            <person name="Miosga T."/>
            <person name="Molemans F."/>
            <person name="Mueller S."/>
            <person name="Nasr F."/>
            <person name="Obermaier B."/>
            <person name="Perea J."/>
            <person name="Pierard A."/>
            <person name="Piravandi E."/>
            <person name="Pohl F.M."/>
            <person name="Pohl T.M."/>
            <person name="Potier S."/>
            <person name="Proft M."/>
            <person name="Purnelle B."/>
            <person name="Ramezani Rad M."/>
            <person name="Rieger M."/>
            <person name="Rose M."/>
            <person name="Schaaff-Gerstenschlaeger I."/>
            <person name="Scherens B."/>
            <person name="Schwarzlose C."/>
            <person name="Skala J."/>
            <person name="Slonimski P.P."/>
            <person name="Smits P.H.M."/>
            <person name="Souciet J.-L."/>
            <person name="Steensma H.Y."/>
            <person name="Stucka R."/>
            <person name="Urrestarazu L.A."/>
            <person name="van der Aart Q.J.M."/>
            <person name="Van Dyck L."/>
            <person name="Vassarotti A."/>
            <person name="Vetter I."/>
            <person name="Vierendeels F."/>
            <person name="Vissers S."/>
            <person name="Wagner G."/>
            <person name="de Wergifosse P."/>
            <person name="Wolfe K.H."/>
            <person name="Zagulski M."/>
            <person name="Zimmermann F.K."/>
            <person name="Mewes H.-W."/>
            <person name="Kleine K."/>
        </authorList>
    </citation>
    <scope>NUCLEOTIDE SEQUENCE [LARGE SCALE GENOMIC DNA]</scope>
    <source>
        <strain>ATCC 204508 / S288c</strain>
    </source>
</reference>
<reference key="2">
    <citation type="journal article" date="2014" name="G3 (Bethesda)">
        <title>The reference genome sequence of Saccharomyces cerevisiae: Then and now.</title>
        <authorList>
            <person name="Engel S.R."/>
            <person name="Dietrich F.S."/>
            <person name="Fisk D.G."/>
            <person name="Binkley G."/>
            <person name="Balakrishnan R."/>
            <person name="Costanzo M.C."/>
            <person name="Dwight S.S."/>
            <person name="Hitz B.C."/>
            <person name="Karra K."/>
            <person name="Nash R.S."/>
            <person name="Weng S."/>
            <person name="Wong E.D."/>
            <person name="Lloyd P."/>
            <person name="Skrzypek M.S."/>
            <person name="Miyasato S.R."/>
            <person name="Simison M."/>
            <person name="Cherry J.M."/>
        </authorList>
    </citation>
    <scope>GENOME REANNOTATION</scope>
    <source>
        <strain>ATCC 204508 / S288c</strain>
    </source>
</reference>
<reference key="3">
    <citation type="journal article" date="1999" name="Science">
        <title>Yeast gene for a Tyr-DNA phosphodiesterase that repairs topoisomerase I complexes.</title>
        <authorList>
            <person name="Pouliot J.J."/>
            <person name="Yao K.C."/>
            <person name="Robertson C.A."/>
            <person name="Nash H.A."/>
        </authorList>
    </citation>
    <scope>FUNCTION</scope>
</reference>
<reference key="4">
    <citation type="journal article" date="2002" name="J. Mol. Biol.">
        <title>Genome-wide nuclear morphology screen identifies novel genes involved in nuclear architecture and gene-silencing in Saccharomyces cerevisiae.</title>
        <authorList>
            <person name="Teixeira M.T."/>
            <person name="Dujon B."/>
            <person name="Fabre E."/>
        </authorList>
    </citation>
    <scope>SUBCELLULAR LOCATION</scope>
</reference>
<reference key="5">
    <citation type="journal article" date="2003" name="Nature">
        <title>Global analysis of protein expression in yeast.</title>
        <authorList>
            <person name="Ghaemmaghami S."/>
            <person name="Huh W.-K."/>
            <person name="Bower K."/>
            <person name="Howson R.W."/>
            <person name="Belle A."/>
            <person name="Dephoure N."/>
            <person name="O'Shea E.K."/>
            <person name="Weissman J.S."/>
        </authorList>
    </citation>
    <scope>LEVEL OF PROTEIN EXPRESSION [LARGE SCALE ANALYSIS]</scope>
</reference>
<reference key="6">
    <citation type="journal article" date="2006" name="Proc. Natl. Acad. Sci. U.S.A.">
        <title>Tyrosyl-DNA phosphodiesterase (Tdp1) participates in the repair of Top2-mediated DNA damage.</title>
        <authorList>
            <person name="Nitiss K.C."/>
            <person name="Malik M."/>
            <person name="He X."/>
            <person name="White S.W."/>
            <person name="Nitiss J.L."/>
        </authorList>
    </citation>
    <scope>FUNCTION</scope>
    <scope>CATALYTIC ACTIVITY</scope>
    <scope>MUTAGENESIS OF HIS-182</scope>
    <scope>ACTIVE SITE</scope>
</reference>
<reference key="7">
    <citation type="journal article" date="2007" name="J. Mol. Biol.">
        <title>Mutation of a conserved active site residue converts tyrosyl-DNA phosphodiesterase I into a DNA topoisomerase I-dependent poison.</title>
        <authorList>
            <person name="He X."/>
            <person name="van Waardenburg R.C.A.M."/>
            <person name="Babaoglu K."/>
            <person name="Price A.C."/>
            <person name="Nitiss K.C."/>
            <person name="Nitiss J.L."/>
            <person name="Bjornsti M.-A."/>
            <person name="White S.W."/>
        </authorList>
    </citation>
    <scope>X-RAY CRYSTALLOGRAPHY (2.1 ANGSTROMS)</scope>
    <scope>MUTAGENESIS OF HIS-432</scope>
    <scope>ACTIVE SITE</scope>
</reference>
<accession>P38319</accession>
<accession>D6VQM0</accession>
<feature type="chain" id="PRO_0000212490" description="Tyrosyl-DNA phosphodiesterase 1">
    <location>
        <begin position="1"/>
        <end position="544"/>
    </location>
</feature>
<feature type="region of interest" description="Interaction with DNA" evidence="2">
    <location>
        <begin position="312"/>
        <end position="316"/>
    </location>
</feature>
<feature type="active site" description="Nucleophile" evidence="6">
    <location>
        <position position="182"/>
    </location>
</feature>
<feature type="active site" description="Proton donor/acceptor" evidence="7">
    <location>
        <position position="432"/>
    </location>
</feature>
<feature type="binding site" evidence="2">
    <location>
        <position position="184"/>
    </location>
    <ligand>
        <name>substrate</name>
    </ligand>
</feature>
<feature type="binding site" evidence="2">
    <location>
        <position position="434"/>
    </location>
    <ligand>
        <name>substrate</name>
    </ligand>
</feature>
<feature type="site" description="Interaction with DNA" evidence="2">
    <location>
        <position position="467"/>
    </location>
</feature>
<feature type="mutagenesis site" description="Loss of activity." evidence="6">
    <original>H</original>
    <variation>A</variation>
    <location>
        <position position="182"/>
    </location>
</feature>
<feature type="mutagenesis site" description="Strongly reduced release of the covalent intermediate with DNA that is formed during the enzyme reaction, leading to the accumulation of toxic adducts. No effect on bleomycin sensitivity." evidence="7">
    <original>H</original>
    <variation>N</variation>
    <location>
        <position position="432"/>
    </location>
</feature>
<feature type="mutagenesis site" description="Interferes with the hydrolysis of the covalent intermediate with DNA that is formed during the enzyme reaction. No effect on bleomycin sensitivity." evidence="7">
    <original>H</original>
    <variation>R</variation>
    <location>
        <position position="432"/>
    </location>
</feature>
<feature type="strand" evidence="10">
    <location>
        <begin position="81"/>
        <end position="85"/>
    </location>
</feature>
<feature type="turn" evidence="10">
    <location>
        <begin position="88"/>
        <end position="90"/>
    </location>
</feature>
<feature type="helix" evidence="10">
    <location>
        <begin position="105"/>
        <end position="109"/>
    </location>
</feature>
<feature type="strand" evidence="10">
    <location>
        <begin position="114"/>
        <end position="120"/>
    </location>
</feature>
<feature type="helix" evidence="10">
    <location>
        <begin position="126"/>
        <end position="130"/>
    </location>
</feature>
<feature type="strand" evidence="10">
    <location>
        <begin position="139"/>
        <end position="145"/>
    </location>
</feature>
<feature type="strand" evidence="10">
    <location>
        <begin position="148"/>
        <end position="150"/>
    </location>
</feature>
<feature type="helix" evidence="10">
    <location>
        <begin position="154"/>
        <end position="156"/>
    </location>
</feature>
<feature type="helix" evidence="10">
    <location>
        <begin position="159"/>
        <end position="165"/>
    </location>
</feature>
<feature type="strand" evidence="10">
    <location>
        <begin position="168"/>
        <end position="173"/>
    </location>
</feature>
<feature type="strand" evidence="10">
    <location>
        <begin position="185"/>
        <end position="190"/>
    </location>
</feature>
<feature type="strand" evidence="10">
    <location>
        <begin position="193"/>
        <end position="202"/>
    </location>
</feature>
<feature type="helix" evidence="10">
    <location>
        <begin position="206"/>
        <end position="210"/>
    </location>
</feature>
<feature type="strand" evidence="10">
    <location>
        <begin position="211"/>
        <end position="213"/>
    </location>
</feature>
<feature type="strand" evidence="10">
    <location>
        <begin position="215"/>
        <end position="218"/>
    </location>
</feature>
<feature type="strand" evidence="10">
    <location>
        <begin position="222"/>
        <end position="224"/>
    </location>
</feature>
<feature type="helix" evidence="10">
    <location>
        <begin position="232"/>
        <end position="242"/>
    </location>
</feature>
<feature type="helix" evidence="10">
    <location>
        <begin position="247"/>
        <end position="252"/>
    </location>
</feature>
<feature type="helix" evidence="10">
    <location>
        <begin position="254"/>
        <end position="258"/>
    </location>
</feature>
<feature type="helix" evidence="10">
    <location>
        <begin position="263"/>
        <end position="265"/>
    </location>
</feature>
<feature type="strand" evidence="10">
    <location>
        <begin position="269"/>
        <end position="273"/>
    </location>
</feature>
<feature type="strand" evidence="9">
    <location>
        <begin position="277"/>
        <end position="279"/>
    </location>
</feature>
<feature type="helix" evidence="10">
    <location>
        <begin position="282"/>
        <end position="293"/>
    </location>
</feature>
<feature type="turn" evidence="10">
    <location>
        <begin position="294"/>
        <end position="296"/>
    </location>
</feature>
<feature type="strand" evidence="10">
    <location>
        <begin position="301"/>
        <end position="309"/>
    </location>
</feature>
<feature type="strand" evidence="10">
    <location>
        <begin position="311"/>
        <end position="313"/>
    </location>
</feature>
<feature type="strand" evidence="10">
    <location>
        <begin position="319"/>
        <end position="321"/>
    </location>
</feature>
<feature type="helix" evidence="10">
    <location>
        <begin position="325"/>
        <end position="328"/>
    </location>
</feature>
<feature type="helix" evidence="10">
    <location>
        <begin position="330"/>
        <end position="334"/>
    </location>
</feature>
<feature type="strand" evidence="11">
    <location>
        <begin position="336"/>
        <end position="338"/>
    </location>
</feature>
<feature type="helix" evidence="10">
    <location>
        <begin position="356"/>
        <end position="366"/>
    </location>
</feature>
<feature type="strand" evidence="10">
    <location>
        <begin position="368"/>
        <end position="373"/>
    </location>
</feature>
<feature type="helix" evidence="10">
    <location>
        <begin position="378"/>
        <end position="380"/>
    </location>
</feature>
<feature type="helix" evidence="10">
    <location>
        <begin position="386"/>
        <end position="392"/>
    </location>
</feature>
<feature type="helix" evidence="10">
    <location>
        <begin position="398"/>
        <end position="400"/>
    </location>
</feature>
<feature type="helix" evidence="10">
    <location>
        <begin position="401"/>
        <end position="409"/>
    </location>
</feature>
<feature type="strand" evidence="10">
    <location>
        <begin position="414"/>
        <end position="416"/>
    </location>
</feature>
<feature type="turn" evidence="10">
    <location>
        <begin position="419"/>
        <end position="421"/>
    </location>
</feature>
<feature type="turn" evidence="10">
    <location>
        <begin position="424"/>
        <end position="428"/>
    </location>
</feature>
<feature type="strand" evidence="10">
    <location>
        <begin position="434"/>
        <end position="441"/>
    </location>
</feature>
<feature type="strand" evidence="10">
    <location>
        <begin position="454"/>
        <end position="463"/>
    </location>
</feature>
<feature type="helix" evidence="10">
    <location>
        <begin position="468"/>
        <end position="471"/>
    </location>
</feature>
<feature type="strand" evidence="10">
    <location>
        <begin position="474"/>
        <end position="476"/>
    </location>
</feature>
<feature type="strand" evidence="10">
    <location>
        <begin position="479"/>
        <end position="488"/>
    </location>
</feature>
<feature type="helix" evidence="10">
    <location>
        <begin position="489"/>
        <end position="491"/>
    </location>
</feature>
<feature type="strand" evidence="10">
    <location>
        <begin position="492"/>
        <end position="495"/>
    </location>
</feature>
<feature type="strand" evidence="10">
    <location>
        <begin position="498"/>
        <end position="502"/>
    </location>
</feature>
<feature type="helix" evidence="10">
    <location>
        <begin position="503"/>
        <end position="505"/>
    </location>
</feature>
<feature type="strand" evidence="10">
    <location>
        <begin position="516"/>
        <end position="521"/>
    </location>
</feature>
<feature type="strand" evidence="9">
    <location>
        <begin position="523"/>
        <end position="527"/>
    </location>
</feature>
<feature type="turn" evidence="10">
    <location>
        <begin position="530"/>
        <end position="532"/>
    </location>
</feature>
<evidence type="ECO:0000250" key="1"/>
<evidence type="ECO:0000250" key="2">
    <source>
        <dbReference type="UniProtKB" id="Q9NUW8"/>
    </source>
</evidence>
<evidence type="ECO:0000269" key="3">
    <source>
    </source>
</evidence>
<evidence type="ECO:0000269" key="4">
    <source>
    </source>
</evidence>
<evidence type="ECO:0000269" key="5">
    <source>
    </source>
</evidence>
<evidence type="ECO:0000269" key="6">
    <source>
    </source>
</evidence>
<evidence type="ECO:0000269" key="7">
    <source>
    </source>
</evidence>
<evidence type="ECO:0000305" key="8"/>
<evidence type="ECO:0007829" key="9">
    <source>
        <dbReference type="PDB" id="3SQ3"/>
    </source>
</evidence>
<evidence type="ECO:0007829" key="10">
    <source>
        <dbReference type="PDB" id="3SQ7"/>
    </source>
</evidence>
<evidence type="ECO:0007829" key="11">
    <source>
        <dbReference type="PDB" id="3SQ8"/>
    </source>
</evidence>
<comment type="function">
    <text evidence="1 3 6">DNA repair enzyme that can remove a variety of covalent adducts from DNA through hydrolysis of a 3'-phosphodiester bond, giving rise to DNA with a free 3' phosphate. Catalyzes the hydrolysis of dead-end complexes between DNA and the topoisomerase I active site tyrosine residue. Hydrolyzes 3'-phosphoglycolates on protruding 3' ends on DNA double-strand breaks due to DNA damage by radiation and free radicals. Also cleaves 5' phosphotyrosyl adducts resulting from dead-end complexes between DNA and the active site tyrosine of topoisomerase II. Contributes to DNA repair after radiation damage. Acts on blunt-ended double-strand DNA breaks and on single-stranded DNA. May have low 3'exonuclease activity and may be able to remove a single nucleoside from the 3'end of DNA and RNA molecules with 3'hydroxyl groups. Has no exonuclease activity towards DNA or RNA with a 3'phosphate (By similarity).</text>
</comment>
<comment type="subcellular location">
    <subcellularLocation>
        <location evidence="4">Nucleus</location>
    </subcellularLocation>
</comment>
<comment type="miscellaneous">
    <text evidence="5">Present with 2130 molecules/cell in log phase SD medium.</text>
</comment>
<comment type="similarity">
    <text evidence="8">Belongs to the tyrosyl-DNA phosphodiesterase family.</text>
</comment>
<proteinExistence type="evidence at protein level"/>